<comment type="miscellaneous">
    <text evidence="2">Present with 1730 molecules/cell in log phase SD medium.</text>
</comment>
<proteinExistence type="evidence at protein level"/>
<organism>
    <name type="scientific">Saccharomyces cerevisiae (strain ATCC 204508 / S288c)</name>
    <name type="common">Baker's yeast</name>
    <dbReference type="NCBI Taxonomy" id="559292"/>
    <lineage>
        <taxon>Eukaryota</taxon>
        <taxon>Fungi</taxon>
        <taxon>Dikarya</taxon>
        <taxon>Ascomycota</taxon>
        <taxon>Saccharomycotina</taxon>
        <taxon>Saccharomycetes</taxon>
        <taxon>Saccharomycetales</taxon>
        <taxon>Saccharomycetaceae</taxon>
        <taxon>Saccharomyces</taxon>
    </lineage>
</organism>
<gene>
    <name type="ordered locus">YLR358C</name>
</gene>
<sequence length="187" mass="20283">MRNGKILCCHCFYNKGDHEDDEGGRSIESLCAVNLAEGLNPRTNGPGKDSFSFSTSGSKPSSSLSFPVTSSMVSSTSSYSSFLFLLVVNHLFSGRLRCGSPEFIIRSFTITLGPLNHNISPFVFFHGNISSLPDLLVWLCRSVRCKTSTFLVIEIGKTNEEAASIIILPKLPLDACDVKSSIIVGIL</sequence>
<accession>O13565</accession>
<accession>I2HB69</accession>
<protein>
    <recommendedName>
        <fullName>Uncharacterized protein YLR358C</fullName>
    </recommendedName>
</protein>
<feature type="chain" id="PRO_0000299641" description="Uncharacterized protein YLR358C">
    <location>
        <begin position="1"/>
        <end position="187"/>
    </location>
</feature>
<feature type="region of interest" description="Disordered" evidence="1">
    <location>
        <begin position="42"/>
        <end position="63"/>
    </location>
</feature>
<feature type="compositionally biased region" description="Low complexity" evidence="1">
    <location>
        <begin position="50"/>
        <end position="63"/>
    </location>
</feature>
<name>YL358_YEAST</name>
<keyword id="KW-1185">Reference proteome</keyword>
<reference key="1">
    <citation type="journal article" date="1997" name="Nature">
        <title>The nucleotide sequence of Saccharomyces cerevisiae chromosome XII.</title>
        <authorList>
            <person name="Johnston M."/>
            <person name="Hillier L.W."/>
            <person name="Riles L."/>
            <person name="Albermann K."/>
            <person name="Andre B."/>
            <person name="Ansorge W."/>
            <person name="Benes V."/>
            <person name="Brueckner M."/>
            <person name="Delius H."/>
            <person name="Dubois E."/>
            <person name="Duesterhoeft A."/>
            <person name="Entian K.-D."/>
            <person name="Floeth M."/>
            <person name="Goffeau A."/>
            <person name="Hebling U."/>
            <person name="Heumann K."/>
            <person name="Heuss-Neitzel D."/>
            <person name="Hilbert H."/>
            <person name="Hilger F."/>
            <person name="Kleine K."/>
            <person name="Koetter P."/>
            <person name="Louis E.J."/>
            <person name="Messenguy F."/>
            <person name="Mewes H.-W."/>
            <person name="Miosga T."/>
            <person name="Moestl D."/>
            <person name="Mueller-Auer S."/>
            <person name="Nentwich U."/>
            <person name="Obermaier B."/>
            <person name="Piravandi E."/>
            <person name="Pohl T.M."/>
            <person name="Portetelle D."/>
            <person name="Purnelle B."/>
            <person name="Rechmann S."/>
            <person name="Rieger M."/>
            <person name="Rinke M."/>
            <person name="Rose M."/>
            <person name="Scharfe M."/>
            <person name="Scherens B."/>
            <person name="Scholler P."/>
            <person name="Schwager C."/>
            <person name="Schwarz S."/>
            <person name="Underwood A.P."/>
            <person name="Urrestarazu L.A."/>
            <person name="Vandenbol M."/>
            <person name="Verhasselt P."/>
            <person name="Vierendeels F."/>
            <person name="Voet M."/>
            <person name="Volckaert G."/>
            <person name="Voss H."/>
            <person name="Wambutt R."/>
            <person name="Wedler E."/>
            <person name="Wedler H."/>
            <person name="Zimmermann F.K."/>
            <person name="Zollner A."/>
            <person name="Hani J."/>
            <person name="Hoheisel J.D."/>
        </authorList>
    </citation>
    <scope>NUCLEOTIDE SEQUENCE [LARGE SCALE GENOMIC DNA]</scope>
    <source>
        <strain>ATCC 204508 / S288c</strain>
    </source>
</reference>
<reference key="2">
    <citation type="journal article" date="2014" name="G3 (Bethesda)">
        <title>The reference genome sequence of Saccharomyces cerevisiae: Then and now.</title>
        <authorList>
            <person name="Engel S.R."/>
            <person name="Dietrich F.S."/>
            <person name="Fisk D.G."/>
            <person name="Binkley G."/>
            <person name="Balakrishnan R."/>
            <person name="Costanzo M.C."/>
            <person name="Dwight S.S."/>
            <person name="Hitz B.C."/>
            <person name="Karra K."/>
            <person name="Nash R.S."/>
            <person name="Weng S."/>
            <person name="Wong E.D."/>
            <person name="Lloyd P."/>
            <person name="Skrzypek M.S."/>
            <person name="Miyasato S.R."/>
            <person name="Simison M."/>
            <person name="Cherry J.M."/>
        </authorList>
    </citation>
    <scope>GENOME REANNOTATION</scope>
    <source>
        <strain>ATCC 204508 / S288c</strain>
    </source>
</reference>
<reference key="3">
    <citation type="journal article" date="2003" name="Nature">
        <title>Global analysis of protein expression in yeast.</title>
        <authorList>
            <person name="Ghaemmaghami S."/>
            <person name="Huh W.-K."/>
            <person name="Bower K."/>
            <person name="Howson R.W."/>
            <person name="Belle A."/>
            <person name="Dephoure N."/>
            <person name="O'Shea E.K."/>
            <person name="Weissman J.S."/>
        </authorList>
    </citation>
    <scope>LEVEL OF PROTEIN EXPRESSION [LARGE SCALE ANALYSIS]</scope>
</reference>
<dbReference type="EMBL" id="U19102">
    <property type="protein sequence ID" value="AAB67754.1"/>
    <property type="molecule type" value="Genomic_DNA"/>
</dbReference>
<dbReference type="EMBL" id="BK006945">
    <property type="protein sequence ID" value="DAA35125.1"/>
    <property type="molecule type" value="Genomic_DNA"/>
</dbReference>
<dbReference type="PIR" id="S69315">
    <property type="entry name" value="S69315"/>
</dbReference>
<dbReference type="RefSeq" id="NP_001257685.1">
    <property type="nucleotide sequence ID" value="NM_001270756.1"/>
</dbReference>
<dbReference type="BioGRID" id="300413">
    <property type="interactions" value="7"/>
</dbReference>
<dbReference type="DIP" id="DIP-2139N"/>
<dbReference type="FunCoup" id="O13565">
    <property type="interactions" value="38"/>
</dbReference>
<dbReference type="IntAct" id="O13565">
    <property type="interactions" value="1"/>
</dbReference>
<dbReference type="MINT" id="O13565"/>
<dbReference type="STRING" id="4932.YLR358C"/>
<dbReference type="PaxDb" id="4932-YLR358C"/>
<dbReference type="EnsemblFungi" id="YLR358C_mRNA">
    <property type="protein sequence ID" value="YLR358C"/>
    <property type="gene ID" value="YLR358C"/>
</dbReference>
<dbReference type="GeneID" id="851072"/>
<dbReference type="KEGG" id="sce:YLR358C"/>
<dbReference type="AGR" id="SGD:S000004350"/>
<dbReference type="SGD" id="S000004350">
    <property type="gene designation" value="YLR358C"/>
</dbReference>
<dbReference type="VEuPathDB" id="FungiDB:YLR358C"/>
<dbReference type="HOGENOM" id="CLU_1448795_0_0_1"/>
<dbReference type="InParanoid" id="O13565"/>
<dbReference type="OrthoDB" id="10304969at2759"/>
<dbReference type="BioCyc" id="YEAST:G3O-32430-MONOMER"/>
<dbReference type="BioGRID-ORCS" id="851072">
    <property type="hits" value="4 hits in 10 CRISPR screens"/>
</dbReference>
<dbReference type="PRO" id="PR:O13565"/>
<dbReference type="Proteomes" id="UP000002311">
    <property type="component" value="Chromosome XII"/>
</dbReference>
<dbReference type="RNAct" id="O13565">
    <property type="molecule type" value="protein"/>
</dbReference>
<evidence type="ECO:0000256" key="1">
    <source>
        <dbReference type="SAM" id="MobiDB-lite"/>
    </source>
</evidence>
<evidence type="ECO:0000269" key="2">
    <source>
    </source>
</evidence>